<keyword id="KW-0349">Heme</keyword>
<keyword id="KW-0408">Iron</keyword>
<keyword id="KW-0472">Membrane</keyword>
<keyword id="KW-0479">Metal-binding</keyword>
<keyword id="KW-0503">Monooxygenase</keyword>
<keyword id="KW-0521">NADP</keyword>
<keyword id="KW-0560">Oxidoreductase</keyword>
<keyword id="KW-1185">Reference proteome</keyword>
<keyword id="KW-0812">Transmembrane</keyword>
<keyword id="KW-1133">Transmembrane helix</keyword>
<proteinExistence type="evidence at protein level"/>
<evidence type="ECO:0000250" key="1"/>
<evidence type="ECO:0000255" key="2"/>
<evidence type="ECO:0000269" key="3">
    <source>
    </source>
</evidence>
<evidence type="ECO:0000269" key="4">
    <source>
    </source>
</evidence>
<evidence type="ECO:0000305" key="5"/>
<accession>Q6YV88</accession>
<accession>A0A0P0VKT3</accession>
<protein>
    <recommendedName>
        <fullName evidence="5">Ent-cassadiene hydroxylase</fullName>
        <ecNumber evidence="3 4">1.14.14.69</ecNumber>
    </recommendedName>
    <alternativeName>
        <fullName>Cytochrome P450 71Z7</fullName>
    </alternativeName>
</protein>
<name>C71Z7_ORYSJ</name>
<feature type="chain" id="PRO_0000418865" description="Ent-cassadiene hydroxylase">
    <location>
        <begin position="1"/>
        <end position="518"/>
    </location>
</feature>
<feature type="transmembrane region" description="Helical" evidence="2">
    <location>
        <begin position="6"/>
        <end position="26"/>
    </location>
</feature>
<feature type="binding site" description="axial binding residue" evidence="1">
    <location>
        <position position="451"/>
    </location>
    <ligand>
        <name>heme</name>
        <dbReference type="ChEBI" id="CHEBI:30413"/>
    </ligand>
    <ligandPart>
        <name>Fe</name>
        <dbReference type="ChEBI" id="CHEBI:18248"/>
    </ligandPart>
</feature>
<feature type="sequence conflict" description="In Ref. 5; AK070167." evidence="5" ref="5">
    <original>S</original>
    <variation>G</variation>
    <location>
        <position position="192"/>
    </location>
</feature>
<comment type="function">
    <text evidence="3 4">Enzyme of the diterpenoid metabolism involved in the biosynthesis of antibacterial oryzalides such as phytocassane (PubMed:21985968). Catalyzes the hydroxylation of ent-cassa-12,15-diene to form ent-3beta-hydroxycassa-12,15-dien-2-one (PubMed:25758958).</text>
</comment>
<comment type="catalytic activity">
    <reaction evidence="4">
        <text>ent-cassa-12,15-diene + 3 reduced [NADPH--hemoprotein reductase] + 3 O2 = ent-3beta-hydroxycassa-12,15-dien-2-one + 3 oxidized [NADPH--hemoprotein reductase] + 4 H2O + 3 H(+)</text>
        <dbReference type="Rhea" id="RHEA:55480"/>
        <dbReference type="Rhea" id="RHEA-COMP:11964"/>
        <dbReference type="Rhea" id="RHEA-COMP:11965"/>
        <dbReference type="ChEBI" id="CHEBI:15377"/>
        <dbReference type="ChEBI" id="CHEBI:15378"/>
        <dbReference type="ChEBI" id="CHEBI:15379"/>
        <dbReference type="ChEBI" id="CHEBI:50060"/>
        <dbReference type="ChEBI" id="CHEBI:57618"/>
        <dbReference type="ChEBI" id="CHEBI:58210"/>
        <dbReference type="ChEBI" id="CHEBI:138970"/>
        <dbReference type="EC" id="1.14.14.69"/>
    </reaction>
</comment>
<comment type="cofactor">
    <cofactor evidence="1">
        <name>heme</name>
        <dbReference type="ChEBI" id="CHEBI:30413"/>
    </cofactor>
</comment>
<comment type="biophysicochemical properties">
    <kinetics>
        <KM evidence="3">200 uM for ent-cassadiene</KM>
        <text evidence="3">kcat is 0.11 sec(-1) with ent-cassadiene as substrate.</text>
    </kinetics>
</comment>
<comment type="subcellular location">
    <subcellularLocation>
        <location evidence="5">Membrane</location>
        <topology evidence="5">Single-pass membrane protein</topology>
    </subcellularLocation>
</comment>
<comment type="similarity">
    <text evidence="5">Belongs to the cytochrome P450 family.</text>
</comment>
<comment type="online information" name="Cytochrome P450 Homepage">
    <link uri="https://drnelson.uthsc.edu/"/>
</comment>
<sequence length="518" mass="57416">MEDNKLILALGLSVLFVLLSKLVSSAMKPRLNLPPGPWTLPLIGSLHHLVMKSPQIHRSLRALSEKHGPIMQLWMGEVPAVIVSSPAVAEEVLKHQDLRFADRHLTATIEEVSFGGRDVTFAPYSERWRHLRKICMQELLTAARVRSFQGVREREVARLVRELAADAGAGGDAGVNLNERISKLANDIVMVSSVGGRCSHRDEFLDALEVAKKQITWLSVADLFPSSKLARMVAVAPRKGLASRKRMELVIRRIIQERKDQLMDDSAAGAGEAAAGKDCFLDVLLRLQKEGGTPVPVTDEIIVVLLFDMFTGASETSPTVLIWILAELMRCPRVMAKAQAEVRQAAVGKTRITENDIVGLSYLKMVIKEALRLHSPAPLLNPRKCRETTQVMGYDIPKGTSVFVNMWAICRDPNYWEDPEEFKPERFENNCVDFKGNNFEFLPFGSGRRICPGINLGLANLELALASLLYHFDWKLPNGMLPKDLDMQETPGIVAAKLTTLNMCPVTQIAPSSAEDAS</sequence>
<dbReference type="EC" id="1.14.14.69" evidence="3 4"/>
<dbReference type="EMBL" id="AP005114">
    <property type="protein sequence ID" value="BAD17264.1"/>
    <property type="molecule type" value="Genomic_DNA"/>
</dbReference>
<dbReference type="EMBL" id="AP005835">
    <property type="protein sequence ID" value="BAD17678.1"/>
    <property type="molecule type" value="Genomic_DNA"/>
</dbReference>
<dbReference type="EMBL" id="AP008208">
    <property type="protein sequence ID" value="BAF09102.1"/>
    <property type="molecule type" value="Genomic_DNA"/>
</dbReference>
<dbReference type="EMBL" id="AP014958">
    <property type="protein sequence ID" value="BAS79341.1"/>
    <property type="molecule type" value="Genomic_DNA"/>
</dbReference>
<dbReference type="EMBL" id="CM000139">
    <property type="protein sequence ID" value="EAZ23511.1"/>
    <property type="molecule type" value="Genomic_DNA"/>
</dbReference>
<dbReference type="EMBL" id="AK070167">
    <property type="status" value="NOT_ANNOTATED_CDS"/>
    <property type="molecule type" value="mRNA"/>
</dbReference>
<dbReference type="RefSeq" id="XP_015623473.1">
    <property type="nucleotide sequence ID" value="XM_015767987.1"/>
</dbReference>
<dbReference type="SMR" id="Q6YV88"/>
<dbReference type="FunCoup" id="Q6YV88">
    <property type="interactions" value="286"/>
</dbReference>
<dbReference type="STRING" id="39947.Q6YV88"/>
<dbReference type="PaxDb" id="39947-Q6YV88"/>
<dbReference type="EnsemblPlants" id="Os02t0570700-01">
    <property type="protein sequence ID" value="Os02t0570700-01"/>
    <property type="gene ID" value="Os02g0570700"/>
</dbReference>
<dbReference type="Gramene" id="Os02t0570700-01">
    <property type="protein sequence ID" value="Os02t0570700-01"/>
    <property type="gene ID" value="Os02g0570700"/>
</dbReference>
<dbReference type="KEGG" id="dosa:Os02g0570700"/>
<dbReference type="eggNOG" id="KOG0156">
    <property type="taxonomic scope" value="Eukaryota"/>
</dbReference>
<dbReference type="HOGENOM" id="CLU_001570_4_1_1"/>
<dbReference type="InParanoid" id="Q6YV88"/>
<dbReference type="OMA" id="DRHLNAT"/>
<dbReference type="OrthoDB" id="2789670at2759"/>
<dbReference type="BioCyc" id="MetaCyc:MONOMER-18620"/>
<dbReference type="BRENDA" id="1.14.14.69">
    <property type="organism ID" value="8948"/>
</dbReference>
<dbReference type="Proteomes" id="UP000000763">
    <property type="component" value="Chromosome 2"/>
</dbReference>
<dbReference type="Proteomes" id="UP000007752">
    <property type="component" value="Chromosome 2"/>
</dbReference>
<dbReference type="Proteomes" id="UP000059680">
    <property type="component" value="Chromosome 2"/>
</dbReference>
<dbReference type="GO" id="GO:0016020">
    <property type="term" value="C:membrane"/>
    <property type="evidence" value="ECO:0007669"/>
    <property type="project" value="UniProtKB-SubCell"/>
</dbReference>
<dbReference type="GO" id="GO:0020037">
    <property type="term" value="F:heme binding"/>
    <property type="evidence" value="ECO:0007669"/>
    <property type="project" value="InterPro"/>
</dbReference>
<dbReference type="GO" id="GO:0005506">
    <property type="term" value="F:iron ion binding"/>
    <property type="evidence" value="ECO:0007669"/>
    <property type="project" value="InterPro"/>
</dbReference>
<dbReference type="GO" id="GO:0004497">
    <property type="term" value="F:monooxygenase activity"/>
    <property type="evidence" value="ECO:0007669"/>
    <property type="project" value="UniProtKB-KW"/>
</dbReference>
<dbReference type="GO" id="GO:0016491">
    <property type="term" value="F:oxidoreductase activity"/>
    <property type="evidence" value="ECO:0000314"/>
    <property type="project" value="UniProtKB"/>
</dbReference>
<dbReference type="GO" id="GO:0016705">
    <property type="term" value="F:oxidoreductase activity, acting on paired donors, with incorporation or reduction of molecular oxygen"/>
    <property type="evidence" value="ECO:0007669"/>
    <property type="project" value="InterPro"/>
</dbReference>
<dbReference type="GO" id="GO:0016102">
    <property type="term" value="P:diterpenoid biosynthetic process"/>
    <property type="evidence" value="ECO:0000314"/>
    <property type="project" value="UniProtKB"/>
</dbReference>
<dbReference type="CDD" id="cd11072">
    <property type="entry name" value="CYP71-like"/>
    <property type="match status" value="1"/>
</dbReference>
<dbReference type="FunFam" id="1.10.630.10:FF:000008">
    <property type="entry name" value="Cytochrome P450 71D8"/>
    <property type="match status" value="1"/>
</dbReference>
<dbReference type="Gene3D" id="1.10.630.10">
    <property type="entry name" value="Cytochrome P450"/>
    <property type="match status" value="1"/>
</dbReference>
<dbReference type="InterPro" id="IPR001128">
    <property type="entry name" value="Cyt_P450"/>
</dbReference>
<dbReference type="InterPro" id="IPR017972">
    <property type="entry name" value="Cyt_P450_CS"/>
</dbReference>
<dbReference type="InterPro" id="IPR002401">
    <property type="entry name" value="Cyt_P450_E_grp-I"/>
</dbReference>
<dbReference type="InterPro" id="IPR036396">
    <property type="entry name" value="Cyt_P450_sf"/>
</dbReference>
<dbReference type="PANTHER" id="PTHR47955:SF19">
    <property type="entry name" value="CYTOCHROME P450 71A9-LIKE ISOFORM X1"/>
    <property type="match status" value="1"/>
</dbReference>
<dbReference type="PANTHER" id="PTHR47955">
    <property type="entry name" value="CYTOCHROME P450 FAMILY 71 PROTEIN"/>
    <property type="match status" value="1"/>
</dbReference>
<dbReference type="Pfam" id="PF00067">
    <property type="entry name" value="p450"/>
    <property type="match status" value="1"/>
</dbReference>
<dbReference type="PRINTS" id="PR00463">
    <property type="entry name" value="EP450I"/>
</dbReference>
<dbReference type="PRINTS" id="PR00385">
    <property type="entry name" value="P450"/>
</dbReference>
<dbReference type="SUPFAM" id="SSF48264">
    <property type="entry name" value="Cytochrome P450"/>
    <property type="match status" value="1"/>
</dbReference>
<dbReference type="PROSITE" id="PS00086">
    <property type="entry name" value="CYTOCHROME_P450"/>
    <property type="match status" value="1"/>
</dbReference>
<organism>
    <name type="scientific">Oryza sativa subsp. japonica</name>
    <name type="common">Rice</name>
    <dbReference type="NCBI Taxonomy" id="39947"/>
    <lineage>
        <taxon>Eukaryota</taxon>
        <taxon>Viridiplantae</taxon>
        <taxon>Streptophyta</taxon>
        <taxon>Embryophyta</taxon>
        <taxon>Tracheophyta</taxon>
        <taxon>Spermatophyta</taxon>
        <taxon>Magnoliopsida</taxon>
        <taxon>Liliopsida</taxon>
        <taxon>Poales</taxon>
        <taxon>Poaceae</taxon>
        <taxon>BOP clade</taxon>
        <taxon>Oryzoideae</taxon>
        <taxon>Oryzeae</taxon>
        <taxon>Oryzinae</taxon>
        <taxon>Oryza</taxon>
        <taxon>Oryza sativa</taxon>
    </lineage>
</organism>
<gene>
    <name type="primary">CYP71Z7</name>
    <name type="ordered locus">Os02g0570700</name>
    <name type="ordered locus">LOC_Os02g36190</name>
    <name type="ORF">OsJ_07207</name>
    <name type="ORF">OSJNBa0008E01.37</name>
    <name type="ORF">P0689H05.7</name>
</gene>
<reference key="1">
    <citation type="journal article" date="2005" name="Nature">
        <title>The map-based sequence of the rice genome.</title>
        <authorList>
            <consortium name="International rice genome sequencing project (IRGSP)"/>
        </authorList>
    </citation>
    <scope>NUCLEOTIDE SEQUENCE [LARGE SCALE GENOMIC DNA]</scope>
    <source>
        <strain>cv. Nipponbare</strain>
    </source>
</reference>
<reference key="2">
    <citation type="journal article" date="2008" name="Nucleic Acids Res.">
        <title>The rice annotation project database (RAP-DB): 2008 update.</title>
        <authorList>
            <consortium name="The rice annotation project (RAP)"/>
        </authorList>
    </citation>
    <scope>GENOME REANNOTATION</scope>
    <source>
        <strain>cv. Nipponbare</strain>
    </source>
</reference>
<reference key="3">
    <citation type="journal article" date="2013" name="Rice">
        <title>Improvement of the Oryza sativa Nipponbare reference genome using next generation sequence and optical map data.</title>
        <authorList>
            <person name="Kawahara Y."/>
            <person name="de la Bastide M."/>
            <person name="Hamilton J.P."/>
            <person name="Kanamori H."/>
            <person name="McCombie W.R."/>
            <person name="Ouyang S."/>
            <person name="Schwartz D.C."/>
            <person name="Tanaka T."/>
            <person name="Wu J."/>
            <person name="Zhou S."/>
            <person name="Childs K.L."/>
            <person name="Davidson R.M."/>
            <person name="Lin H."/>
            <person name="Quesada-Ocampo L."/>
            <person name="Vaillancourt B."/>
            <person name="Sakai H."/>
            <person name="Lee S.S."/>
            <person name="Kim J."/>
            <person name="Numa H."/>
            <person name="Itoh T."/>
            <person name="Buell C.R."/>
            <person name="Matsumoto T."/>
        </authorList>
    </citation>
    <scope>GENOME REANNOTATION</scope>
    <source>
        <strain>cv. Nipponbare</strain>
    </source>
</reference>
<reference key="4">
    <citation type="journal article" date="2005" name="PLoS Biol.">
        <title>The genomes of Oryza sativa: a history of duplications.</title>
        <authorList>
            <person name="Yu J."/>
            <person name="Wang J."/>
            <person name="Lin W."/>
            <person name="Li S."/>
            <person name="Li H."/>
            <person name="Zhou J."/>
            <person name="Ni P."/>
            <person name="Dong W."/>
            <person name="Hu S."/>
            <person name="Zeng C."/>
            <person name="Zhang J."/>
            <person name="Zhang Y."/>
            <person name="Li R."/>
            <person name="Xu Z."/>
            <person name="Li S."/>
            <person name="Li X."/>
            <person name="Zheng H."/>
            <person name="Cong L."/>
            <person name="Lin L."/>
            <person name="Yin J."/>
            <person name="Geng J."/>
            <person name="Li G."/>
            <person name="Shi J."/>
            <person name="Liu J."/>
            <person name="Lv H."/>
            <person name="Li J."/>
            <person name="Wang J."/>
            <person name="Deng Y."/>
            <person name="Ran L."/>
            <person name="Shi X."/>
            <person name="Wang X."/>
            <person name="Wu Q."/>
            <person name="Li C."/>
            <person name="Ren X."/>
            <person name="Wang J."/>
            <person name="Wang X."/>
            <person name="Li D."/>
            <person name="Liu D."/>
            <person name="Zhang X."/>
            <person name="Ji Z."/>
            <person name="Zhao W."/>
            <person name="Sun Y."/>
            <person name="Zhang Z."/>
            <person name="Bao J."/>
            <person name="Han Y."/>
            <person name="Dong L."/>
            <person name="Ji J."/>
            <person name="Chen P."/>
            <person name="Wu S."/>
            <person name="Liu J."/>
            <person name="Xiao Y."/>
            <person name="Bu D."/>
            <person name="Tan J."/>
            <person name="Yang L."/>
            <person name="Ye C."/>
            <person name="Zhang J."/>
            <person name="Xu J."/>
            <person name="Zhou Y."/>
            <person name="Yu Y."/>
            <person name="Zhang B."/>
            <person name="Zhuang S."/>
            <person name="Wei H."/>
            <person name="Liu B."/>
            <person name="Lei M."/>
            <person name="Yu H."/>
            <person name="Li Y."/>
            <person name="Xu H."/>
            <person name="Wei S."/>
            <person name="He X."/>
            <person name="Fang L."/>
            <person name="Zhang Z."/>
            <person name="Zhang Y."/>
            <person name="Huang X."/>
            <person name="Su Z."/>
            <person name="Tong W."/>
            <person name="Li J."/>
            <person name="Tong Z."/>
            <person name="Li S."/>
            <person name="Ye J."/>
            <person name="Wang L."/>
            <person name="Fang L."/>
            <person name="Lei T."/>
            <person name="Chen C.-S."/>
            <person name="Chen H.-C."/>
            <person name="Xu Z."/>
            <person name="Li H."/>
            <person name="Huang H."/>
            <person name="Zhang F."/>
            <person name="Xu H."/>
            <person name="Li N."/>
            <person name="Zhao C."/>
            <person name="Li S."/>
            <person name="Dong L."/>
            <person name="Huang Y."/>
            <person name="Li L."/>
            <person name="Xi Y."/>
            <person name="Qi Q."/>
            <person name="Li W."/>
            <person name="Zhang B."/>
            <person name="Hu W."/>
            <person name="Zhang Y."/>
            <person name="Tian X."/>
            <person name="Jiao Y."/>
            <person name="Liang X."/>
            <person name="Jin J."/>
            <person name="Gao L."/>
            <person name="Zheng W."/>
            <person name="Hao B."/>
            <person name="Liu S.-M."/>
            <person name="Wang W."/>
            <person name="Yuan L."/>
            <person name="Cao M."/>
            <person name="McDermott J."/>
            <person name="Samudrala R."/>
            <person name="Wang J."/>
            <person name="Wong G.K.-S."/>
            <person name="Yang H."/>
        </authorList>
    </citation>
    <scope>NUCLEOTIDE SEQUENCE [LARGE SCALE GENOMIC DNA]</scope>
    <source>
        <strain>cv. Nipponbare</strain>
    </source>
</reference>
<reference key="5">
    <citation type="journal article" date="2003" name="Science">
        <title>Collection, mapping, and annotation of over 28,000 cDNA clones from japonica rice.</title>
        <authorList>
            <consortium name="The rice full-length cDNA consortium"/>
        </authorList>
    </citation>
    <scope>NUCLEOTIDE SEQUENCE [LARGE SCALE MRNA]</scope>
    <source>
        <strain>cv. Nipponbare</strain>
    </source>
</reference>
<reference key="6">
    <citation type="journal article" date="2002" name="Sci. China, Ser. C, Life Sci.">
        <title>Putative cytochrome P450 genes in rice genome (Oryza sativa L. ssp. indica) and their EST evidence.</title>
        <authorList>
            <person name="Zhong L."/>
            <person name="Wang K."/>
            <person name="Tan J."/>
            <person name="Li W."/>
            <person name="Li S."/>
        </authorList>
    </citation>
    <scope>GENE FAMILY</scope>
    <scope>NOMENCLATURE</scope>
</reference>
<reference key="7">
    <citation type="journal article" date="2011" name="FEBS Lett.">
        <title>Parsing a multifunctional biosynthetic gene cluster from rice: Biochemical characterization of CYP71Z6 &amp; 7.</title>
        <authorList>
            <person name="Wu Y."/>
            <person name="Hillwig M.L."/>
            <person name="Wang Q."/>
            <person name="Peters R.J."/>
        </authorList>
    </citation>
    <scope>FUNCTION</scope>
    <scope>BIOPHYSICOCHEMICAL PROPERTIES</scope>
</reference>
<reference key="8">
    <citation type="journal article" date="2015" name="Appl. Microbiol. Biotechnol.">
        <title>Optimization of recombinant expression enables discovery of novel cytochrome P450 activity in rice diterpenoid biosynthesis.</title>
        <authorList>
            <person name="Kitaoka N."/>
            <person name="Wu Y."/>
            <person name="Xu M."/>
            <person name="Peters R.J."/>
        </authorList>
    </citation>
    <scope>FUNCTION</scope>
    <scope>CATALYTIC ACTIVITY</scope>
</reference>